<comment type="function">
    <text evidence="1">One of the proteins required for the normal export of preproteins out of the cell cytoplasm. It is a molecular chaperone that binds to a subset of precursor proteins, maintaining them in a translocation-competent state. It also specifically binds to its receptor SecA.</text>
</comment>
<comment type="subunit">
    <text evidence="1">Homotetramer, a dimer of dimers. One homotetramer interacts with 1 SecA dimer.</text>
</comment>
<comment type="subcellular location">
    <subcellularLocation>
        <location evidence="1">Cytoplasm</location>
    </subcellularLocation>
</comment>
<comment type="similarity">
    <text evidence="1">Belongs to the SecB family.</text>
</comment>
<sequence>MSEQNNTEMAFQIQRIYTKDISFEAPNAPQVFQQDWQPEVKLDLDTASSQLAEDVYEVVLRVTVTASLGEETAFLCEVQQGGIFSVAGIEGTQLAHCLGAYCPNILFPYARECITSLVSRGTFPQLNLAPVNFDALFMNYLQQQAEGEVEGVEQRQDA</sequence>
<reference key="1">
    <citation type="submission" date="2007-02" db="EMBL/GenBank/DDBJ databases">
        <title>Complete sequence of chromosome of Yersinia pestis Pestoides F.</title>
        <authorList>
            <consortium name="US DOE Joint Genome Institute"/>
            <person name="Copeland A."/>
            <person name="Lucas S."/>
            <person name="Lapidus A."/>
            <person name="Barry K."/>
            <person name="Detter J.C."/>
            <person name="Glavina del Rio T."/>
            <person name="Hammon N."/>
            <person name="Israni S."/>
            <person name="Dalin E."/>
            <person name="Tice H."/>
            <person name="Pitluck S."/>
            <person name="Di Bartolo G."/>
            <person name="Chain P."/>
            <person name="Malfatti S."/>
            <person name="Shin M."/>
            <person name="Vergez L."/>
            <person name="Schmutz J."/>
            <person name="Larimer F."/>
            <person name="Land M."/>
            <person name="Hauser L."/>
            <person name="Worsham P."/>
            <person name="Chu M."/>
            <person name="Bearden S."/>
            <person name="Garcia E."/>
            <person name="Richardson P."/>
        </authorList>
    </citation>
    <scope>NUCLEOTIDE SEQUENCE [LARGE SCALE GENOMIC DNA]</scope>
    <source>
        <strain>Pestoides F</strain>
    </source>
</reference>
<protein>
    <recommendedName>
        <fullName evidence="1">Protein-export protein SecB</fullName>
    </recommendedName>
</protein>
<proteinExistence type="inferred from homology"/>
<keyword id="KW-0143">Chaperone</keyword>
<keyword id="KW-0963">Cytoplasm</keyword>
<keyword id="KW-0653">Protein transport</keyword>
<keyword id="KW-0811">Translocation</keyword>
<keyword id="KW-0813">Transport</keyword>
<name>SECB_YERPP</name>
<accession>A4TSB9</accession>
<organism>
    <name type="scientific">Yersinia pestis (strain Pestoides F)</name>
    <dbReference type="NCBI Taxonomy" id="386656"/>
    <lineage>
        <taxon>Bacteria</taxon>
        <taxon>Pseudomonadati</taxon>
        <taxon>Pseudomonadota</taxon>
        <taxon>Gammaproteobacteria</taxon>
        <taxon>Enterobacterales</taxon>
        <taxon>Yersiniaceae</taxon>
        <taxon>Yersinia</taxon>
    </lineage>
</organism>
<gene>
    <name evidence="1" type="primary">secB</name>
    <name type="ordered locus">YPDSF_3838</name>
</gene>
<dbReference type="EMBL" id="CP000668">
    <property type="protein sequence ID" value="ABP42181.1"/>
    <property type="molecule type" value="Genomic_DNA"/>
</dbReference>
<dbReference type="RefSeq" id="WP_002208976.1">
    <property type="nucleotide sequence ID" value="NZ_CP009715.1"/>
</dbReference>
<dbReference type="SMR" id="A4TSB9"/>
<dbReference type="GeneID" id="96663547"/>
<dbReference type="KEGG" id="ypp:YPDSF_3838"/>
<dbReference type="PATRIC" id="fig|386656.14.peg.680"/>
<dbReference type="GO" id="GO:0005737">
    <property type="term" value="C:cytoplasm"/>
    <property type="evidence" value="ECO:0007669"/>
    <property type="project" value="UniProtKB-SubCell"/>
</dbReference>
<dbReference type="GO" id="GO:0051082">
    <property type="term" value="F:unfolded protein binding"/>
    <property type="evidence" value="ECO:0007669"/>
    <property type="project" value="InterPro"/>
</dbReference>
<dbReference type="GO" id="GO:0006457">
    <property type="term" value="P:protein folding"/>
    <property type="evidence" value="ECO:0007669"/>
    <property type="project" value="UniProtKB-UniRule"/>
</dbReference>
<dbReference type="GO" id="GO:0051262">
    <property type="term" value="P:protein tetramerization"/>
    <property type="evidence" value="ECO:0007669"/>
    <property type="project" value="InterPro"/>
</dbReference>
<dbReference type="GO" id="GO:0015031">
    <property type="term" value="P:protein transport"/>
    <property type="evidence" value="ECO:0007669"/>
    <property type="project" value="UniProtKB-UniRule"/>
</dbReference>
<dbReference type="CDD" id="cd00557">
    <property type="entry name" value="Translocase_SecB"/>
    <property type="match status" value="1"/>
</dbReference>
<dbReference type="FunFam" id="3.10.420.10:FF:000001">
    <property type="entry name" value="Protein-export chaperone SecB"/>
    <property type="match status" value="1"/>
</dbReference>
<dbReference type="Gene3D" id="3.10.420.10">
    <property type="entry name" value="SecB-like"/>
    <property type="match status" value="1"/>
</dbReference>
<dbReference type="HAMAP" id="MF_00821">
    <property type="entry name" value="SecB"/>
    <property type="match status" value="1"/>
</dbReference>
<dbReference type="InterPro" id="IPR003708">
    <property type="entry name" value="SecB"/>
</dbReference>
<dbReference type="InterPro" id="IPR035958">
    <property type="entry name" value="SecB-like_sf"/>
</dbReference>
<dbReference type="NCBIfam" id="NF004390">
    <property type="entry name" value="PRK05751.1-1"/>
    <property type="match status" value="1"/>
</dbReference>
<dbReference type="NCBIfam" id="NF004393">
    <property type="entry name" value="PRK05751.1-4"/>
    <property type="match status" value="1"/>
</dbReference>
<dbReference type="NCBIfam" id="TIGR00809">
    <property type="entry name" value="secB"/>
    <property type="match status" value="1"/>
</dbReference>
<dbReference type="PANTHER" id="PTHR36918">
    <property type="match status" value="1"/>
</dbReference>
<dbReference type="PANTHER" id="PTHR36918:SF1">
    <property type="entry name" value="PROTEIN-EXPORT PROTEIN SECB"/>
    <property type="match status" value="1"/>
</dbReference>
<dbReference type="Pfam" id="PF02556">
    <property type="entry name" value="SecB"/>
    <property type="match status" value="1"/>
</dbReference>
<dbReference type="PRINTS" id="PR01594">
    <property type="entry name" value="SECBCHAPRONE"/>
</dbReference>
<dbReference type="SUPFAM" id="SSF54611">
    <property type="entry name" value="SecB-like"/>
    <property type="match status" value="1"/>
</dbReference>
<feature type="chain" id="PRO_1000062538" description="Protein-export protein SecB">
    <location>
        <begin position="1"/>
        <end position="158"/>
    </location>
</feature>
<evidence type="ECO:0000255" key="1">
    <source>
        <dbReference type="HAMAP-Rule" id="MF_00821"/>
    </source>
</evidence>